<protein>
    <recommendedName>
        <fullName evidence="24">Interferon-induced transmembrane protein 1</fullName>
    </recommendedName>
    <alternativeName>
        <fullName>Dispanin subfamily A member 2a</fullName>
        <shortName>DSPA2a</shortName>
    </alternativeName>
    <alternativeName>
        <fullName>Interferon-induced protein 17</fullName>
    </alternativeName>
    <alternativeName>
        <fullName>Interferon-inducible protein 9-27</fullName>
    </alternativeName>
    <alternativeName>
        <fullName>Leu-13 antigen</fullName>
    </alternativeName>
    <cdAntigenName>CD225</cdAntigenName>
</protein>
<proteinExistence type="evidence at protein level"/>
<evidence type="ECO:0000255" key="1"/>
<evidence type="ECO:0000269" key="2">
    <source>
    </source>
</evidence>
<evidence type="ECO:0000269" key="3">
    <source>
    </source>
</evidence>
<evidence type="ECO:0000269" key="4">
    <source>
    </source>
</evidence>
<evidence type="ECO:0000269" key="5">
    <source>
    </source>
</evidence>
<evidence type="ECO:0000269" key="6">
    <source>
    </source>
</evidence>
<evidence type="ECO:0000269" key="7">
    <source>
    </source>
</evidence>
<evidence type="ECO:0000269" key="8">
    <source>
    </source>
</evidence>
<evidence type="ECO:0000269" key="9">
    <source>
    </source>
</evidence>
<evidence type="ECO:0000269" key="10">
    <source>
    </source>
</evidence>
<evidence type="ECO:0000269" key="11">
    <source>
    </source>
</evidence>
<evidence type="ECO:0000269" key="12">
    <source>
    </source>
</evidence>
<evidence type="ECO:0000269" key="13">
    <source>
    </source>
</evidence>
<evidence type="ECO:0000269" key="14">
    <source>
    </source>
</evidence>
<evidence type="ECO:0000269" key="15">
    <source>
    </source>
</evidence>
<evidence type="ECO:0000269" key="16">
    <source>
    </source>
</evidence>
<evidence type="ECO:0000269" key="17">
    <source>
    </source>
</evidence>
<evidence type="ECO:0000269" key="18">
    <source>
    </source>
</evidence>
<evidence type="ECO:0000269" key="19">
    <source>
    </source>
</evidence>
<evidence type="ECO:0000269" key="20">
    <source>
    </source>
</evidence>
<evidence type="ECO:0000269" key="21">
    <source ref="3"/>
</evidence>
<evidence type="ECO:0000269" key="22">
    <source ref="6"/>
</evidence>
<evidence type="ECO:0000303" key="23">
    <source>
    </source>
</evidence>
<evidence type="ECO:0000305" key="24"/>
<evidence type="ECO:0000305" key="25">
    <source>
    </source>
</evidence>
<evidence type="ECO:0000312" key="26">
    <source>
        <dbReference type="HGNC" id="HGNC:5412"/>
    </source>
</evidence>
<evidence type="ECO:0007744" key="27">
    <source>
    </source>
</evidence>
<evidence type="ECO:0007744" key="28">
    <source>
    </source>
</evidence>
<sequence>MHKEEHEVAVLGPPPSTILPRSTVINIHSETSVPDHVVWSLFNTLFLNWCCLGFIAFAYSVKSRDRKMVGDVTGAQAYASTAKCLNIWALILGILMTIGFILLLVFGSVTVYHIMLQIIQEKRGY</sequence>
<name>IFM1_HUMAN</name>
<feature type="chain" id="PRO_0000153727" description="Interferon-induced transmembrane protein 1">
    <location>
        <begin position="1"/>
        <end position="125"/>
    </location>
</feature>
<feature type="topological domain" description="Cytoplasmic" evidence="1">
    <location>
        <begin position="1"/>
        <end position="36"/>
    </location>
</feature>
<feature type="intramembrane region" description="Helical" evidence="23">
    <location>
        <begin position="37"/>
        <end position="57"/>
    </location>
</feature>
<feature type="topological domain" description="Cytoplasmic" evidence="1">
    <location>
        <begin position="58"/>
        <end position="86"/>
    </location>
</feature>
<feature type="transmembrane region" description="Helical" evidence="1">
    <location>
        <begin position="87"/>
        <end position="107"/>
    </location>
</feature>
<feature type="topological domain" description="Extracellular" evidence="1">
    <location>
        <begin position="108"/>
        <end position="125"/>
    </location>
</feature>
<feature type="region of interest" description="Interaction with CAV1" evidence="6">
    <location>
        <begin position="84"/>
        <end position="125"/>
    </location>
</feature>
<feature type="modified residue" description="Phosphoserine" evidence="28">
    <location>
        <position position="16"/>
    </location>
</feature>
<feature type="lipid moiety-binding region" description="S-palmitoyl cysteine" evidence="25">
    <location>
        <position position="50"/>
    </location>
</feature>
<feature type="lipid moiety-binding region" description="S-palmitoyl cysteine" evidence="25">
    <location>
        <position position="51"/>
    </location>
</feature>
<feature type="lipid moiety-binding region" description="S-palmitoyl cysteine" evidence="25">
    <location>
        <position position="84"/>
    </location>
</feature>
<feature type="sequence variant" id="VAR_047422" description="In dbSNP:rs9667990." evidence="3 4 15 20 21 22 27 28">
    <original>P</original>
    <variation>A</variation>
    <location>
        <position position="13"/>
    </location>
</feature>
<feature type="mutagenesis site" description="No effect on anti-HCV activity. Only localizes at the lysosome." evidence="17">
    <original>CC</original>
    <variation>AA</variation>
    <location>
        <begin position="50"/>
        <end position="51"/>
    </location>
</feature>
<feature type="mutagenesis site" description="Loss of anti-HCV activity. Only localizes at the lysosome." evidence="17">
    <original>C</original>
    <variation>A</variation>
    <location>
        <position position="84"/>
    </location>
</feature>
<feature type="sequence conflict" description="In Ref. 1; AAA35494." evidence="24" ref="1">
    <original>L</original>
    <variation>S</variation>
    <location>
        <position position="103"/>
    </location>
</feature>
<keyword id="KW-0051">Antiviral defense</keyword>
<keyword id="KW-1003">Cell membrane</keyword>
<keyword id="KW-0391">Immunity</keyword>
<keyword id="KW-0399">Innate immunity</keyword>
<keyword id="KW-0449">Lipoprotein</keyword>
<keyword id="KW-0458">Lysosome</keyword>
<keyword id="KW-0472">Membrane</keyword>
<keyword id="KW-0892">Osteogenesis</keyword>
<keyword id="KW-0564">Palmitate</keyword>
<keyword id="KW-0597">Phosphoprotein</keyword>
<keyword id="KW-1267">Proteomics identification</keyword>
<keyword id="KW-1185">Reference proteome</keyword>
<keyword id="KW-0812">Transmembrane</keyword>
<keyword id="KW-1133">Transmembrane helix</keyword>
<accession>P13164</accession>
<accession>Q15322</accession>
<accession>Q53XZ0</accession>
<dbReference type="EMBL" id="J04164">
    <property type="protein sequence ID" value="AAA35494.1"/>
    <property type="molecule type" value="mRNA"/>
</dbReference>
<dbReference type="EMBL" id="X84958">
    <property type="protein sequence ID" value="CAA59337.1"/>
    <property type="molecule type" value="mRNA"/>
</dbReference>
<dbReference type="EMBL" id="BT007173">
    <property type="protein sequence ID" value="AAP35837.1"/>
    <property type="molecule type" value="mRNA"/>
</dbReference>
<dbReference type="EMBL" id="AK290480">
    <property type="protein sequence ID" value="BAF83169.1"/>
    <property type="molecule type" value="mRNA"/>
</dbReference>
<dbReference type="EMBL" id="AC136475">
    <property type="status" value="NOT_ANNOTATED_CDS"/>
    <property type="molecule type" value="Genomic_DNA"/>
</dbReference>
<dbReference type="EMBL" id="CH471278">
    <property type="protein sequence ID" value="EAW61218.1"/>
    <property type="molecule type" value="Genomic_DNA"/>
</dbReference>
<dbReference type="EMBL" id="BC000897">
    <property type="protein sequence ID" value="AAH00897.1"/>
    <property type="molecule type" value="mRNA"/>
</dbReference>
<dbReference type="CCDS" id="CCDS41584.1"/>
<dbReference type="PIR" id="A31454">
    <property type="entry name" value="A31454"/>
</dbReference>
<dbReference type="RefSeq" id="NP_003632.3">
    <property type="nucleotide sequence ID" value="NM_003641.3"/>
</dbReference>
<dbReference type="BioGRID" id="114091">
    <property type="interactions" value="363"/>
</dbReference>
<dbReference type="DIP" id="DIP-32672N"/>
<dbReference type="FunCoup" id="P13164">
    <property type="interactions" value="185"/>
</dbReference>
<dbReference type="IntAct" id="P13164">
    <property type="interactions" value="30"/>
</dbReference>
<dbReference type="MINT" id="P13164"/>
<dbReference type="STRING" id="9606.ENSP00000330825"/>
<dbReference type="TCDB" id="8.A.58.1.1">
    <property type="family name" value="the dispanin (dispanin) family"/>
</dbReference>
<dbReference type="GlyGen" id="P13164">
    <property type="glycosylation" value="1 site, 1 O-linked glycan (1 site)"/>
</dbReference>
<dbReference type="iPTMnet" id="P13164"/>
<dbReference type="PhosphoSitePlus" id="P13164"/>
<dbReference type="SwissPalm" id="P13164"/>
<dbReference type="BioMuta" id="IFITM1"/>
<dbReference type="DMDM" id="215274118"/>
<dbReference type="jPOST" id="P13164"/>
<dbReference type="MassIVE" id="P13164"/>
<dbReference type="PaxDb" id="9606-ENSP00000386187"/>
<dbReference type="PeptideAtlas" id="P13164"/>
<dbReference type="ProteomicsDB" id="52897"/>
<dbReference type="Pumba" id="P13164"/>
<dbReference type="TopDownProteomics" id="P13164"/>
<dbReference type="Antibodypedia" id="1282">
    <property type="antibodies" value="391 antibodies from 38 providers"/>
</dbReference>
<dbReference type="DNASU" id="8519"/>
<dbReference type="Ensembl" id="ENST00000328221.5">
    <property type="protein sequence ID" value="ENSP00000330825.5"/>
    <property type="gene ID" value="ENSG00000185885.17"/>
</dbReference>
<dbReference type="Ensembl" id="ENST00000408968.4">
    <property type="protein sequence ID" value="ENSP00000386187.3"/>
    <property type="gene ID" value="ENSG00000185885.17"/>
</dbReference>
<dbReference type="Ensembl" id="ENST00000528780.5">
    <property type="protein sequence ID" value="ENSP00000437057.1"/>
    <property type="gene ID" value="ENSG00000185885.17"/>
</dbReference>
<dbReference type="Ensembl" id="ENST00000680588.1">
    <property type="protein sequence ID" value="ENSP00000505380.1"/>
    <property type="gene ID" value="ENSG00000185885.17"/>
</dbReference>
<dbReference type="GeneID" id="8519"/>
<dbReference type="KEGG" id="hsa:8519"/>
<dbReference type="MANE-Select" id="ENST00000408968.4">
    <property type="protein sequence ID" value="ENSP00000386187.3"/>
    <property type="RefSeq nucleotide sequence ID" value="NM_003641.5"/>
    <property type="RefSeq protein sequence ID" value="NP_003632.4"/>
</dbReference>
<dbReference type="UCSC" id="uc001loy.5">
    <property type="organism name" value="human"/>
</dbReference>
<dbReference type="AGR" id="HGNC:5412"/>
<dbReference type="CTD" id="8519"/>
<dbReference type="DisGeNET" id="8519"/>
<dbReference type="GeneCards" id="IFITM1"/>
<dbReference type="HGNC" id="HGNC:5412">
    <property type="gene designation" value="IFITM1"/>
</dbReference>
<dbReference type="HPA" id="ENSG00000185885">
    <property type="expression patterns" value="Low tissue specificity"/>
</dbReference>
<dbReference type="MIM" id="604456">
    <property type="type" value="gene"/>
</dbReference>
<dbReference type="neXtProt" id="NX_P13164"/>
<dbReference type="OpenTargets" id="ENSG00000185885"/>
<dbReference type="PharmGKB" id="PA29653"/>
<dbReference type="VEuPathDB" id="HostDB:ENSG00000185885"/>
<dbReference type="eggNOG" id="ENOG502S9XK">
    <property type="taxonomic scope" value="Eukaryota"/>
</dbReference>
<dbReference type="GeneTree" id="ENSGT00950000182857"/>
<dbReference type="HOGENOM" id="CLU_124511_3_0_1"/>
<dbReference type="InParanoid" id="P13164"/>
<dbReference type="OMA" id="LYANVCC"/>
<dbReference type="PAN-GO" id="P13164">
    <property type="GO annotations" value="8 GO annotations based on evolutionary models"/>
</dbReference>
<dbReference type="PhylomeDB" id="P13164"/>
<dbReference type="TreeFam" id="TF334894"/>
<dbReference type="PathwayCommons" id="P13164"/>
<dbReference type="Reactome" id="R-HSA-198933">
    <property type="pathway name" value="Immunoregulatory interactions between a Lymphoid and a non-Lymphoid cell"/>
</dbReference>
<dbReference type="Reactome" id="R-HSA-909733">
    <property type="pathway name" value="Interferon alpha/beta signaling"/>
</dbReference>
<dbReference type="SignaLink" id="P13164"/>
<dbReference type="BioGRID-ORCS" id="8519">
    <property type="hits" value="13 hits in 1151 CRISPR screens"/>
</dbReference>
<dbReference type="ChiTaRS" id="IFITM1">
    <property type="organism name" value="human"/>
</dbReference>
<dbReference type="GeneWiki" id="IFITM1"/>
<dbReference type="GenomeRNAi" id="8519"/>
<dbReference type="Pharos" id="P13164">
    <property type="development level" value="Tbio"/>
</dbReference>
<dbReference type="PRO" id="PR:P13164"/>
<dbReference type="Proteomes" id="UP000005640">
    <property type="component" value="Chromosome 11"/>
</dbReference>
<dbReference type="RNAct" id="P13164">
    <property type="molecule type" value="protein"/>
</dbReference>
<dbReference type="Bgee" id="ENSG00000185885">
    <property type="expression patterns" value="Expressed in right ovary and 199 other cell types or tissues"/>
</dbReference>
<dbReference type="GO" id="GO:0005794">
    <property type="term" value="C:Golgi apparatus"/>
    <property type="evidence" value="ECO:0000314"/>
    <property type="project" value="HPA"/>
</dbReference>
<dbReference type="GO" id="GO:0005765">
    <property type="term" value="C:lysosomal membrane"/>
    <property type="evidence" value="ECO:0000314"/>
    <property type="project" value="UniProtKB"/>
</dbReference>
<dbReference type="GO" id="GO:0016020">
    <property type="term" value="C:membrane"/>
    <property type="evidence" value="ECO:0007005"/>
    <property type="project" value="UniProtKB"/>
</dbReference>
<dbReference type="GO" id="GO:0005886">
    <property type="term" value="C:plasma membrane"/>
    <property type="evidence" value="ECO:0000314"/>
    <property type="project" value="UniProtKB"/>
</dbReference>
<dbReference type="GO" id="GO:0032991">
    <property type="term" value="C:protein-containing complex"/>
    <property type="evidence" value="ECO:0000314"/>
    <property type="project" value="MGI"/>
</dbReference>
<dbReference type="GO" id="GO:0007166">
    <property type="term" value="P:cell surface receptor signaling pathway"/>
    <property type="evidence" value="ECO:0000304"/>
    <property type="project" value="ProtInc"/>
</dbReference>
<dbReference type="GO" id="GO:0051607">
    <property type="term" value="P:defense response to virus"/>
    <property type="evidence" value="ECO:0000318"/>
    <property type="project" value="GO_Central"/>
</dbReference>
<dbReference type="GO" id="GO:0046597">
    <property type="term" value="P:host-mediated suppression of symbiont invasion"/>
    <property type="evidence" value="ECO:0000314"/>
    <property type="project" value="UniProtKB"/>
</dbReference>
<dbReference type="GO" id="GO:0030336">
    <property type="term" value="P:negative regulation of cell migration"/>
    <property type="evidence" value="ECO:0000315"/>
    <property type="project" value="UniProtKB"/>
</dbReference>
<dbReference type="GO" id="GO:0008285">
    <property type="term" value="P:negative regulation of cell population proliferation"/>
    <property type="evidence" value="ECO:0000315"/>
    <property type="project" value="UniProtKB"/>
</dbReference>
<dbReference type="GO" id="GO:0045071">
    <property type="term" value="P:negative regulation of viral genome replication"/>
    <property type="evidence" value="ECO:0000314"/>
    <property type="project" value="UniProtKB"/>
</dbReference>
<dbReference type="GO" id="GO:0001503">
    <property type="term" value="P:ossification"/>
    <property type="evidence" value="ECO:0007669"/>
    <property type="project" value="UniProtKB-KW"/>
</dbReference>
<dbReference type="GO" id="GO:0045669">
    <property type="term" value="P:positive regulation of osteoblast differentiation"/>
    <property type="evidence" value="ECO:0000315"/>
    <property type="project" value="UniProtKB"/>
</dbReference>
<dbReference type="GO" id="GO:0035455">
    <property type="term" value="P:response to interferon-alpha"/>
    <property type="evidence" value="ECO:0000314"/>
    <property type="project" value="UniProtKB"/>
</dbReference>
<dbReference type="GO" id="GO:0035456">
    <property type="term" value="P:response to interferon-beta"/>
    <property type="evidence" value="ECO:0000314"/>
    <property type="project" value="UniProtKB"/>
</dbReference>
<dbReference type="GO" id="GO:0034341">
    <property type="term" value="P:response to type II interferon"/>
    <property type="evidence" value="ECO:0000314"/>
    <property type="project" value="UniProtKB"/>
</dbReference>
<dbReference type="GO" id="GO:0009615">
    <property type="term" value="P:response to virus"/>
    <property type="evidence" value="ECO:0000314"/>
    <property type="project" value="UniProtKB"/>
</dbReference>
<dbReference type="GO" id="GO:0060337">
    <property type="term" value="P:type I interferon-mediated signaling pathway"/>
    <property type="evidence" value="ECO:0000318"/>
    <property type="project" value="GO_Central"/>
</dbReference>
<dbReference type="InterPro" id="IPR007593">
    <property type="entry name" value="CD225/Dispanin_fam"/>
</dbReference>
<dbReference type="InterPro" id="IPR051517">
    <property type="entry name" value="IFITM_antiviral_protein"/>
</dbReference>
<dbReference type="PANTHER" id="PTHR13999">
    <property type="entry name" value="INTERFERON INDUCIBLE TRANSMEMBRANE PROTEIN"/>
    <property type="match status" value="1"/>
</dbReference>
<dbReference type="PANTHER" id="PTHR13999:SF6">
    <property type="entry name" value="INTERFERON-INDUCED TRANSMEMBRANE PROTEIN 1"/>
    <property type="match status" value="1"/>
</dbReference>
<dbReference type="Pfam" id="PF04505">
    <property type="entry name" value="CD225"/>
    <property type="match status" value="1"/>
</dbReference>
<reference key="1">
    <citation type="journal article" date="1989" name="Proc. Natl. Acad. Sci. U.S.A.">
        <title>A single DNA response element can confer inducibility by both alpha- and gamma-interferons.</title>
        <authorList>
            <person name="Reid L.E."/>
            <person name="Brasnett A.H."/>
            <person name="Gilbert C.S."/>
            <person name="Porter A.C.G."/>
            <person name="Gewert D.R."/>
            <person name="Stark G.R."/>
            <person name="Kerr I.M."/>
        </authorList>
    </citation>
    <scope>NUCLEOTIDE SEQUENCE [MRNA]</scope>
    <scope>VARIANT ALA-13</scope>
</reference>
<reference key="2">
    <citation type="journal article" date="1995" name="J. Biol. Chem.">
        <title>Expression cloning of an interferon-inducible 17-kDa membrane protein implicated in the control of cell growth.</title>
        <authorList>
            <person name="Deblandre G.A."/>
            <person name="Marinx O.P."/>
            <person name="Evans S.S."/>
            <person name="Majjaj S."/>
            <person name="Leo O."/>
            <person name="Caput D."/>
            <person name="Huez G.A."/>
            <person name="Wathelet M.G."/>
        </authorList>
    </citation>
    <scope>NUCLEOTIDE SEQUENCE [MRNA]</scope>
    <scope>VARIANT ALA-13</scope>
</reference>
<reference key="3">
    <citation type="submission" date="2003-05" db="EMBL/GenBank/DDBJ databases">
        <title>Cloning of human full-length CDSs in BD Creator(TM) system donor vector.</title>
        <authorList>
            <person name="Kalnine N."/>
            <person name="Chen X."/>
            <person name="Rolfs A."/>
            <person name="Halleck A."/>
            <person name="Hines L."/>
            <person name="Eisenstein S."/>
            <person name="Koundinya M."/>
            <person name="Raphael J."/>
            <person name="Moreira D."/>
            <person name="Kelley T."/>
            <person name="LaBaer J."/>
            <person name="Lin Y."/>
            <person name="Phelan M."/>
            <person name="Farmer A."/>
        </authorList>
    </citation>
    <scope>NUCLEOTIDE SEQUENCE [LARGE SCALE MRNA]</scope>
    <scope>VARIANT ALA-13</scope>
</reference>
<reference key="4">
    <citation type="journal article" date="2004" name="Nat. Genet.">
        <title>Complete sequencing and characterization of 21,243 full-length human cDNAs.</title>
        <authorList>
            <person name="Ota T."/>
            <person name="Suzuki Y."/>
            <person name="Nishikawa T."/>
            <person name="Otsuki T."/>
            <person name="Sugiyama T."/>
            <person name="Irie R."/>
            <person name="Wakamatsu A."/>
            <person name="Hayashi K."/>
            <person name="Sato H."/>
            <person name="Nagai K."/>
            <person name="Kimura K."/>
            <person name="Makita H."/>
            <person name="Sekine M."/>
            <person name="Obayashi M."/>
            <person name="Nishi T."/>
            <person name="Shibahara T."/>
            <person name="Tanaka T."/>
            <person name="Ishii S."/>
            <person name="Yamamoto J."/>
            <person name="Saito K."/>
            <person name="Kawai Y."/>
            <person name="Isono Y."/>
            <person name="Nakamura Y."/>
            <person name="Nagahari K."/>
            <person name="Murakami K."/>
            <person name="Yasuda T."/>
            <person name="Iwayanagi T."/>
            <person name="Wagatsuma M."/>
            <person name="Shiratori A."/>
            <person name="Sudo H."/>
            <person name="Hosoiri T."/>
            <person name="Kaku Y."/>
            <person name="Kodaira H."/>
            <person name="Kondo H."/>
            <person name="Sugawara M."/>
            <person name="Takahashi M."/>
            <person name="Kanda K."/>
            <person name="Yokoi T."/>
            <person name="Furuya T."/>
            <person name="Kikkawa E."/>
            <person name="Omura Y."/>
            <person name="Abe K."/>
            <person name="Kamihara K."/>
            <person name="Katsuta N."/>
            <person name="Sato K."/>
            <person name="Tanikawa M."/>
            <person name="Yamazaki M."/>
            <person name="Ninomiya K."/>
            <person name="Ishibashi T."/>
            <person name="Yamashita H."/>
            <person name="Murakawa K."/>
            <person name="Fujimori K."/>
            <person name="Tanai H."/>
            <person name="Kimata M."/>
            <person name="Watanabe M."/>
            <person name="Hiraoka S."/>
            <person name="Chiba Y."/>
            <person name="Ishida S."/>
            <person name="Ono Y."/>
            <person name="Takiguchi S."/>
            <person name="Watanabe S."/>
            <person name="Yosida M."/>
            <person name="Hotuta T."/>
            <person name="Kusano J."/>
            <person name="Kanehori K."/>
            <person name="Takahashi-Fujii A."/>
            <person name="Hara H."/>
            <person name="Tanase T.-O."/>
            <person name="Nomura Y."/>
            <person name="Togiya S."/>
            <person name="Komai F."/>
            <person name="Hara R."/>
            <person name="Takeuchi K."/>
            <person name="Arita M."/>
            <person name="Imose N."/>
            <person name="Musashino K."/>
            <person name="Yuuki H."/>
            <person name="Oshima A."/>
            <person name="Sasaki N."/>
            <person name="Aotsuka S."/>
            <person name="Yoshikawa Y."/>
            <person name="Matsunawa H."/>
            <person name="Ichihara T."/>
            <person name="Shiohata N."/>
            <person name="Sano S."/>
            <person name="Moriya S."/>
            <person name="Momiyama H."/>
            <person name="Satoh N."/>
            <person name="Takami S."/>
            <person name="Terashima Y."/>
            <person name="Suzuki O."/>
            <person name="Nakagawa S."/>
            <person name="Senoh A."/>
            <person name="Mizoguchi H."/>
            <person name="Goto Y."/>
            <person name="Shimizu F."/>
            <person name="Wakebe H."/>
            <person name="Hishigaki H."/>
            <person name="Watanabe T."/>
            <person name="Sugiyama A."/>
            <person name="Takemoto M."/>
            <person name="Kawakami B."/>
            <person name="Yamazaki M."/>
            <person name="Watanabe K."/>
            <person name="Kumagai A."/>
            <person name="Itakura S."/>
            <person name="Fukuzumi Y."/>
            <person name="Fujimori Y."/>
            <person name="Komiyama M."/>
            <person name="Tashiro H."/>
            <person name="Tanigami A."/>
            <person name="Fujiwara T."/>
            <person name="Ono T."/>
            <person name="Yamada K."/>
            <person name="Fujii Y."/>
            <person name="Ozaki K."/>
            <person name="Hirao M."/>
            <person name="Ohmori Y."/>
            <person name="Kawabata A."/>
            <person name="Hikiji T."/>
            <person name="Kobatake N."/>
            <person name="Inagaki H."/>
            <person name="Ikema Y."/>
            <person name="Okamoto S."/>
            <person name="Okitani R."/>
            <person name="Kawakami T."/>
            <person name="Noguchi S."/>
            <person name="Itoh T."/>
            <person name="Shigeta K."/>
            <person name="Senba T."/>
            <person name="Matsumura K."/>
            <person name="Nakajima Y."/>
            <person name="Mizuno T."/>
            <person name="Morinaga M."/>
            <person name="Sasaki M."/>
            <person name="Togashi T."/>
            <person name="Oyama M."/>
            <person name="Hata H."/>
            <person name="Watanabe M."/>
            <person name="Komatsu T."/>
            <person name="Mizushima-Sugano J."/>
            <person name="Satoh T."/>
            <person name="Shirai Y."/>
            <person name="Takahashi Y."/>
            <person name="Nakagawa K."/>
            <person name="Okumura K."/>
            <person name="Nagase T."/>
            <person name="Nomura N."/>
            <person name="Kikuchi H."/>
            <person name="Masuho Y."/>
            <person name="Yamashita R."/>
            <person name="Nakai K."/>
            <person name="Yada T."/>
            <person name="Nakamura Y."/>
            <person name="Ohara O."/>
            <person name="Isogai T."/>
            <person name="Sugano S."/>
        </authorList>
    </citation>
    <scope>NUCLEOTIDE SEQUENCE [LARGE SCALE MRNA]</scope>
    <scope>VARIANT ALA-13</scope>
    <source>
        <tissue>Brain</tissue>
    </source>
</reference>
<reference key="5">
    <citation type="journal article" date="2006" name="Nature">
        <title>Human chromosome 11 DNA sequence and analysis including novel gene identification.</title>
        <authorList>
            <person name="Taylor T.D."/>
            <person name="Noguchi H."/>
            <person name="Totoki Y."/>
            <person name="Toyoda A."/>
            <person name="Kuroki Y."/>
            <person name="Dewar K."/>
            <person name="Lloyd C."/>
            <person name="Itoh T."/>
            <person name="Takeda T."/>
            <person name="Kim D.-W."/>
            <person name="She X."/>
            <person name="Barlow K.F."/>
            <person name="Bloom T."/>
            <person name="Bruford E."/>
            <person name="Chang J.L."/>
            <person name="Cuomo C.A."/>
            <person name="Eichler E."/>
            <person name="FitzGerald M.G."/>
            <person name="Jaffe D.B."/>
            <person name="LaButti K."/>
            <person name="Nicol R."/>
            <person name="Park H.-S."/>
            <person name="Seaman C."/>
            <person name="Sougnez C."/>
            <person name="Yang X."/>
            <person name="Zimmer A.R."/>
            <person name="Zody M.C."/>
            <person name="Birren B.W."/>
            <person name="Nusbaum C."/>
            <person name="Fujiyama A."/>
            <person name="Hattori M."/>
            <person name="Rogers J."/>
            <person name="Lander E.S."/>
            <person name="Sakaki Y."/>
        </authorList>
    </citation>
    <scope>NUCLEOTIDE SEQUENCE [LARGE SCALE GENOMIC DNA]</scope>
</reference>
<reference key="6">
    <citation type="submission" date="2005-07" db="EMBL/GenBank/DDBJ databases">
        <authorList>
            <person name="Mural R.J."/>
            <person name="Istrail S."/>
            <person name="Sutton G."/>
            <person name="Florea L."/>
            <person name="Halpern A.L."/>
            <person name="Mobarry C.M."/>
            <person name="Lippert R."/>
            <person name="Walenz B."/>
            <person name="Shatkay H."/>
            <person name="Dew I."/>
            <person name="Miller J.R."/>
            <person name="Flanigan M.J."/>
            <person name="Edwards N.J."/>
            <person name="Bolanos R."/>
            <person name="Fasulo D."/>
            <person name="Halldorsson B.V."/>
            <person name="Hannenhalli S."/>
            <person name="Turner R."/>
            <person name="Yooseph S."/>
            <person name="Lu F."/>
            <person name="Nusskern D.R."/>
            <person name="Shue B.C."/>
            <person name="Zheng X.H."/>
            <person name="Zhong F."/>
            <person name="Delcher A.L."/>
            <person name="Huson D.H."/>
            <person name="Kravitz S.A."/>
            <person name="Mouchard L."/>
            <person name="Reinert K."/>
            <person name="Remington K.A."/>
            <person name="Clark A.G."/>
            <person name="Waterman M.S."/>
            <person name="Eichler E.E."/>
            <person name="Adams M.D."/>
            <person name="Hunkapiller M.W."/>
            <person name="Myers E.W."/>
            <person name="Venter J.C."/>
        </authorList>
    </citation>
    <scope>NUCLEOTIDE SEQUENCE [LARGE SCALE GENOMIC DNA]</scope>
    <scope>VARIANT ALA-13</scope>
</reference>
<reference key="7">
    <citation type="journal article" date="2004" name="Genome Res.">
        <title>The status, quality, and expansion of the NIH full-length cDNA project: the Mammalian Gene Collection (MGC).</title>
        <authorList>
            <consortium name="The MGC Project Team"/>
        </authorList>
    </citation>
    <scope>NUCLEOTIDE SEQUENCE [LARGE SCALE MRNA]</scope>
    <scope>VARIANT ALA-13</scope>
    <source>
        <tissue>Cervix</tissue>
    </source>
</reference>
<reference key="8">
    <citation type="journal article" date="1990" name="J. Immunol.">
        <title>TAPA-1, the target of an antiproliferative antibody, is associated on the cell surface with the Leu-13 antigen.</title>
        <authorList>
            <person name="Takahashi S."/>
            <person name="Doss C."/>
            <person name="Levy S."/>
            <person name="Levy R."/>
        </authorList>
    </citation>
    <scope>INTERACTION WITH CD81</scope>
</reference>
<reference key="9">
    <citation type="journal article" date="1992" name="J. Immunol.">
        <title>The CD19/CD21 signal transducing complex of human B lymphocytes includes the target of antiproliferative antibody-1 and Leu-13 molecules.</title>
        <authorList>
            <person name="Bradbury L.E."/>
            <person name="Kansas G.S."/>
            <person name="Levy S."/>
            <person name="Evans R.L."/>
            <person name="Tedder T.F."/>
        </authorList>
    </citation>
    <scope>IDENTIFICATION IN A COMPLEX WITH CR2; CD81 AND CD19</scope>
    <scope>SUBCELLULAR LOCATION</scope>
</reference>
<reference key="10">
    <citation type="journal article" date="2007" name="Oncogene">
        <title>IFITM1 plays an essential role in the antiproliferative action of interferon-gamma.</title>
        <authorList>
            <person name="Yang G."/>
            <person name="Xu Y."/>
            <person name="Chen X."/>
            <person name="Hu G."/>
        </authorList>
    </citation>
    <scope>FUNCTION</scope>
</reference>
<reference key="11">
    <citation type="journal article" date="2009" name="Acta Biochim. Biophys. Sin.">
        <title>Binding of IFITM1 enhances the inhibiting effect of caveolin-1 on ERK activation.</title>
        <authorList>
            <person name="Xu Y."/>
            <person name="Yang G."/>
            <person name="Hu G."/>
        </authorList>
    </citation>
    <scope>SUBCELLULAR LOCATION</scope>
    <scope>INTERACTION WITH CAV1</scope>
</reference>
<reference key="12">
    <citation type="journal article" date="2009" name="Cell">
        <title>The IFITM proteins mediate cellular resistance to influenza A H1N1 virus, West Nile virus, and dengue virus.</title>
        <authorList>
            <person name="Brass A.L."/>
            <person name="Huang I.C."/>
            <person name="Benita Y."/>
            <person name="John S.P."/>
            <person name="Krishnan M.N."/>
            <person name="Feeley E.M."/>
            <person name="Ryan B.J."/>
            <person name="Weyer J.L."/>
            <person name="van der Weyden L."/>
            <person name="Fikrig E."/>
            <person name="Adams D.J."/>
            <person name="Xavier R.J."/>
            <person name="Farzan M."/>
            <person name="Elledge S.J."/>
        </authorList>
    </citation>
    <scope>FUNCTION IN VIRAL RESISTANCE</scope>
</reference>
<reference key="13">
    <citation type="journal article" date="2011" name="J. Interferon Cytokine Res.">
        <title>The small interferon-induced transmembrane genes and proteins.</title>
        <authorList>
            <person name="Siegrist F."/>
            <person name="Ebeling M."/>
            <person name="Certa U."/>
        </authorList>
    </citation>
    <scope>REVIEW</scope>
</reference>
<reference key="14">
    <citation type="journal article" date="2011" name="J. Neurooncol.">
        <title>Knockdown of interferon-induced transmembrane protein 1 (IFITM1) inhibits proliferation, migration, and invasion of glioma cells.</title>
        <authorList>
            <person name="Yu F."/>
            <person name="Ng S.S."/>
            <person name="Chow B.K."/>
            <person name="Sze J."/>
            <person name="Lu G."/>
            <person name="Poon W.S."/>
            <person name="Kung H.F."/>
            <person name="Lin M.C."/>
        </authorList>
    </citation>
    <scope>FUNCTION</scope>
    <scope>TISSUE SPECIFICITY</scope>
</reference>
<reference key="15">
    <citation type="journal article" date="2011" name="J. Virol.">
        <title>The IFITM proteins inhibit HIV-1 infection.</title>
        <authorList>
            <person name="Lu J."/>
            <person name="Pan Q."/>
            <person name="Rong L."/>
            <person name="He W."/>
            <person name="Liu S.L."/>
            <person name="Liang C."/>
        </authorList>
    </citation>
    <scope>FUNCTION</scope>
</reference>
<reference key="16">
    <citation type="journal article" date="2011" name="J. Virol.">
        <authorList>
            <person name="Lu J."/>
            <person name="Pan Q."/>
            <person name="Rong L."/>
            <person name="He W."/>
            <person name="Liu S.L."/>
            <person name="Liang C."/>
        </authorList>
    </citation>
    <scope>ERRATUM OF PUBMED:21177806</scope>
</reference>
<reference key="17">
    <citation type="journal article" date="2011" name="J. Virol.">
        <title>ISG56 and IFITM1 proteins inhibit hepatitis C virus replication.</title>
        <authorList>
            <person name="Raychoudhuri A."/>
            <person name="Shrivastava S."/>
            <person name="Steele R."/>
            <person name="Kim H."/>
            <person name="Ray R."/>
            <person name="Ray R.B."/>
        </authorList>
    </citation>
    <scope>FUNCTION</scope>
</reference>
<reference key="18">
    <citation type="journal article" date="2011" name="PLoS Pathog.">
        <title>Distinct patterns of IFITM-mediated restriction of filoviruses, SARS coronavirus, and influenza A virus.</title>
        <authorList>
            <person name="Huang I.C."/>
            <person name="Bailey C.C."/>
            <person name="Weyer J.L."/>
            <person name="Radoshitzky S.R."/>
            <person name="Becker M.M."/>
            <person name="Chiang J.J."/>
            <person name="Brass A.L."/>
            <person name="Ahmed A.A."/>
            <person name="Chi X."/>
            <person name="Dong L."/>
            <person name="Longobardi L.E."/>
            <person name="Boltz D."/>
            <person name="Kuhn J.H."/>
            <person name="Elledge S.J."/>
            <person name="Bavari S."/>
            <person name="Denison M.R."/>
            <person name="Choe H."/>
            <person name="Farzan M."/>
        </authorList>
    </citation>
    <scope>FUNCTION</scope>
</reference>
<reference key="19">
    <citation type="journal article" date="2012" name="Bone">
        <title>IFITM1 increases osteogenesis through Runx2 in human alveolar-derived bone marrow stromal cells.</title>
        <authorList>
            <person name="Kim B.S."/>
            <person name="Kim H.J."/>
            <person name="Kim J.S."/>
            <person name="You Y.O."/>
            <person name="Zadeh H."/>
            <person name="Shin H.I."/>
            <person name="Lee S.J."/>
            <person name="Park Y.J."/>
            <person name="Takata T."/>
            <person name="Pi S.H."/>
            <person name="Lee J."/>
            <person name="You H.K."/>
        </authorList>
    </citation>
    <scope>FUNCTION</scope>
    <scope>TISSUE SPECIFICITY</scope>
</reference>
<reference key="20">
    <citation type="journal article" date="2012" name="PLoS ONE">
        <title>IFITM proteins restrict antibody-dependent enhancement of dengue virus infection.</title>
        <authorList>
            <person name="Chan Y.K."/>
            <person name="Huang I.C."/>
            <person name="Farzan M."/>
        </authorList>
    </citation>
    <scope>FUNCTION</scope>
</reference>
<reference key="21">
    <citation type="journal article" date="2012" name="PLoS ONE">
        <title>The dispanins: a novel gene family of ancient origin that contains 14 human members.</title>
        <authorList>
            <person name="Sallman Almen M."/>
            <person name="Bringeland N."/>
            <person name="Fredriksson R."/>
            <person name="Schioth H.B."/>
        </authorList>
    </citation>
    <scope>GENE FAMILY</scope>
</reference>
<reference key="22">
    <citation type="journal article" date="2013" name="J. Proteome Res.">
        <title>Toward a comprehensive characterization of a human cancer cell phosphoproteome.</title>
        <authorList>
            <person name="Zhou H."/>
            <person name="Di Palma S."/>
            <person name="Preisinger C."/>
            <person name="Peng M."/>
            <person name="Polat A.N."/>
            <person name="Heck A.J."/>
            <person name="Mohammed S."/>
        </authorList>
    </citation>
    <scope>PHOSPHORYLATION [LARGE SCALE ANALYSIS] AT SER-16</scope>
    <scope>VARIANT [LARGE SCALE ANALYSIS] ALA-13</scope>
    <scope>IDENTIFICATION BY MASS SPECTROMETRY [LARGE SCALE ANALYSIS]</scope>
    <source>
        <tissue>Erythroleukemia</tissue>
    </source>
</reference>
<reference key="23">
    <citation type="journal article" date="2014" name="PLoS ONE">
        <title>A membrane topology model for human interferon inducible transmembrane protein 1.</title>
        <authorList>
            <person name="Weston S."/>
            <person name="Czieso S."/>
            <person name="White I.J."/>
            <person name="Smith S.E."/>
            <person name="Kellam P."/>
            <person name="Marsh M."/>
        </authorList>
    </citation>
    <scope>SUBCELLULAR LOCATION</scope>
    <scope>TOPOLOGY</scope>
</reference>
<reference key="24">
    <citation type="journal article" date="2015" name="J. Biol. Chem.">
        <title>The Interferon-induced Transmembrane Proteins, IFITM1, IFITM2, and IFITM3 Inhibit Hepatitis C Virus Entry.</title>
        <authorList>
            <person name="Narayana S.K."/>
            <person name="Helbig K.J."/>
            <person name="McCartney E.M."/>
            <person name="Eyre N.S."/>
            <person name="Bull R.A."/>
            <person name="Eltahla A."/>
            <person name="Lloyd A.R."/>
            <person name="Beard M.R."/>
        </authorList>
    </citation>
    <scope>FUNCTION</scope>
    <scope>SUBCELLULAR LOCATION</scope>
    <scope>PALMITOYLATION AT CYS-50; CYS-51 AND CYS-84</scope>
    <scope>MUTAGENESIS OF 50-CYS-CYS-51 AND CYS-84</scope>
</reference>
<reference key="25">
    <citation type="journal article" date="2020" name="EMBO J.">
        <title>Syncytia formation by SARS-CoV-2-infected cells.</title>
        <authorList>
            <person name="Buchrieser J."/>
            <person name="Dufloo J."/>
            <person name="Hubert M."/>
            <person name="Monel B."/>
            <person name="Planas D."/>
            <person name="Rajah M.M."/>
            <person name="Planchais C."/>
            <person name="Porrot F."/>
            <person name="Guivel-Benhassine F."/>
            <person name="Van der Werf S."/>
            <person name="Casartelli N."/>
            <person name="Mouquet H."/>
            <person name="Bruel T."/>
            <person name="Schwartz O."/>
        </authorList>
    </citation>
    <scope>FUNCTION (MICROBIAL INFECTION)</scope>
</reference>
<reference key="26">
    <citation type="journal article" date="2021" name="EMBO J.">
        <title>Syncytia formation by SARS-CoV-2-infected cells.</title>
        <authorList>
            <person name="Buchrieser J."/>
            <person name="Dufloo J."/>
            <person name="Hubert M."/>
            <person name="Monel B."/>
            <person name="Planas D."/>
            <person name="Rajah M.M."/>
            <person name="Planchais C."/>
            <person name="Porrot F."/>
            <person name="Guivel-Benhassine F."/>
            <person name="Van der Werf S."/>
            <person name="Casartelli N."/>
            <person name="Mouquet H."/>
            <person name="Bruel T."/>
            <person name="Schwartz O."/>
        </authorList>
    </citation>
    <scope>ERRATUM OF PUBMED:33051876</scope>
</reference>
<reference key="27">
    <citation type="journal article" date="2021" name="EMBO J.">
        <title>Opposing activities of IFITM proteins in SARS-CoV-2 infection.</title>
        <authorList>
            <person name="Shi G."/>
            <person name="Kenney A.D."/>
            <person name="Kudryashova E."/>
            <person name="Zani A."/>
            <person name="Zhang L."/>
            <person name="Lai K.K."/>
            <person name="Hall-Stoodley L."/>
            <person name="Robinson R.T."/>
            <person name="Kudryashov D.S."/>
            <person name="Compton A.A."/>
            <person name="Yount J.S."/>
        </authorList>
    </citation>
    <scope>FUNCTION</scope>
</reference>
<reference key="28">
    <citation type="journal article" date="2011" name="BMC Syst. Biol.">
        <title>Initial characterization of the human central proteome.</title>
        <authorList>
            <person name="Burkard T.R."/>
            <person name="Planyavsky M."/>
            <person name="Kaupe I."/>
            <person name="Breitwieser F.P."/>
            <person name="Buerckstuemmer T."/>
            <person name="Bennett K.L."/>
            <person name="Superti-Furga G."/>
            <person name="Colinge J."/>
        </authorList>
    </citation>
    <scope>VARIANT [LARGE SCALE ANALYSIS] ALA-13</scope>
    <scope>IDENTIFICATION BY MASS SPECTROMETRY [LARGE SCALE ANALYSIS]</scope>
</reference>
<comment type="function">
    <text evidence="5 7 8 9 10 11 12 13 17 18 19">IFN-induced antiviral protein which inhibits the entry of viruses to the host cell cytoplasm, permitting endocytosis, but preventing subsequent viral fusion and release of viral contents into the cytosol. Active against multiple viruses, including influenza A virus, SARS coronaviruses (SARS-CoV and SARS-CoV-2), Marburg virus (MARV), Ebola virus (EBOV), Dengue virus (DNV), West Nile virus (WNV), human immunodeficiency virus type 1 (HIV-1) and hepatitis C virus (HCV) (PubMed:26354436, PubMed:33270927). Can inhibit: influenza virus hemagglutinin protein-mediated viral entry, MARV and EBOV GP1,2-mediated viral entry and SARS-CoV and SARS-CoV-2 S protein-mediated viral entry. Also implicated in cell adhesion and control of cell growth and migration (PubMed:33270927). Inhibits SARS-CoV-2 S protein-mediated syncytia formation (PubMed:33051876). Plays a key role in the antiproliferative action of IFN-gamma either by inhibiting the ERK activation or by arresting cell growth in G1 phase in a p53-dependent manner. Acts as a positive regulator of osteoblast differentiation. In hepatocytes, IFITM proteins act in a coordinated manner to restrict HCV infection by targeting the endocytosed HCV virion for lysosomal degradation (PubMed:26354436). IFITM2 and IFITM3 display anti-HCV activity that may complement the anti-HCV activity of IFITM1 by inhibiting the late stages of HCV entry, possibly in a coordinated manner by trapping the virion in the endosomal pathway and targeting it for degradation at the lysosome (PubMed:26354436).</text>
</comment>
<comment type="subunit">
    <text evidence="2 6 14 17">Interacts with CD81 (PubMed:2398277, PubMed:26354436). Part of a complex composed of CD19, CR2/CD21, CD81 and IFITM1/CD225 in the membrane of mature B-cells (PubMed:1383329). Interacts with CAV1; this interaction enhances the ability of CAV1 in inhibiting ERK activation (PubMed:19499152).</text>
</comment>
<comment type="subcellular location">
    <subcellularLocation>
        <location evidence="2 6 16 17">Cell membrane</location>
        <topology evidence="6">Single-pass membrane protein</topology>
    </subcellularLocation>
    <subcellularLocation>
        <location evidence="17">Lysosome membrane</location>
    </subcellularLocation>
</comment>
<comment type="tissue specificity">
    <text evidence="8 13">Bone (at protein level). Levels greatly elevated in colon cancer, cervical cancer, esophageal cancer and ovarian cancer. Expressed in glioma cell lines.</text>
</comment>
<comment type="induction">
    <text>By IFN-alpha and IFNG/IFN-gamma.</text>
</comment>
<comment type="PTM">
    <text evidence="25">Palmitoylation on membrane-proximal cysteines controls clustering in membrane compartments and antiviral activity.</text>
</comment>
<comment type="similarity">
    <text evidence="24">Belongs to the CD225/Dispanin family.</text>
</comment>
<gene>
    <name evidence="26" type="primary">IFITM1</name>
    <name type="synonym">CD225</name>
    <name type="synonym">IFI17</name>
</gene>
<organism>
    <name type="scientific">Homo sapiens</name>
    <name type="common">Human</name>
    <dbReference type="NCBI Taxonomy" id="9606"/>
    <lineage>
        <taxon>Eukaryota</taxon>
        <taxon>Metazoa</taxon>
        <taxon>Chordata</taxon>
        <taxon>Craniata</taxon>
        <taxon>Vertebrata</taxon>
        <taxon>Euteleostomi</taxon>
        <taxon>Mammalia</taxon>
        <taxon>Eutheria</taxon>
        <taxon>Euarchontoglires</taxon>
        <taxon>Primates</taxon>
        <taxon>Haplorrhini</taxon>
        <taxon>Catarrhini</taxon>
        <taxon>Hominidae</taxon>
        <taxon>Homo</taxon>
    </lineage>
</organism>